<protein>
    <recommendedName>
        <fullName>SLIT-ROBO Rho GTPase-activating protein 1</fullName>
        <shortName>srGAP1</shortName>
    </recommendedName>
    <alternativeName>
        <fullName>Rho GTPase-activating protein 13</fullName>
    </alternativeName>
</protein>
<name>SRGP1_MOUSE</name>
<gene>
    <name type="primary">Srgap1</name>
    <name type="synonym">Arhgap13</name>
</gene>
<accession>Q91Z69</accession>
<accession>Q08E84</accession>
<proteinExistence type="evidence at protein level"/>
<reference key="1">
    <citation type="journal article" date="2004" name="Genome Res.">
        <title>The status, quality, and expansion of the NIH full-length cDNA project: the Mammalian Gene Collection (MGC).</title>
        <authorList>
            <consortium name="The MGC Project Team"/>
        </authorList>
    </citation>
    <scope>NUCLEOTIDE SEQUENCE [LARGE SCALE MRNA]</scope>
</reference>
<reference key="2">
    <citation type="journal article" date="2001" name="Cell">
        <title>Signal transduction in neuronal migration: roles of GTPase activating proteins and the small GTPase Cdc42 in the Slit-Robo pathway.</title>
        <authorList>
            <person name="Wong K."/>
            <person name="Ren X.R."/>
            <person name="Huang Y.Z."/>
            <person name="Xie Y."/>
            <person name="Liu G."/>
            <person name="Saito H."/>
            <person name="Tang H."/>
            <person name="Wen L."/>
            <person name="Brady-Kalnay S.M."/>
            <person name="Mei L."/>
            <person name="Wu J.Y."/>
            <person name="Xiong W.C."/>
            <person name="Rao Y."/>
        </authorList>
    </citation>
    <scope>NUCLEOTIDE SEQUENCE [MRNA] OF 353-1062</scope>
</reference>
<reference key="3">
    <citation type="journal article" date="2010" name="Cell">
        <title>A tissue-specific atlas of mouse protein phosphorylation and expression.</title>
        <authorList>
            <person name="Huttlin E.L."/>
            <person name="Jedrychowski M.P."/>
            <person name="Elias J.E."/>
            <person name="Goswami T."/>
            <person name="Rad R."/>
            <person name="Beausoleil S.A."/>
            <person name="Villen J."/>
            <person name="Haas W."/>
            <person name="Sowa M.E."/>
            <person name="Gygi S.P."/>
        </authorList>
    </citation>
    <scope>IDENTIFICATION BY MASS SPECTROMETRY [LARGE SCALE ANALYSIS]</scope>
    <source>
        <tissue>Brain</tissue>
    </source>
</reference>
<reference key="4">
    <citation type="journal article" date="2006" name="J. Biol. Chem.">
        <title>Structural basis of Robo proline-rich motif recognition by the srGAP1 Src homology 3 domain in the Slit-Robo signaling pathway.</title>
        <authorList>
            <person name="Li X."/>
            <person name="Chen Y."/>
            <person name="Liu Y."/>
            <person name="Gao J."/>
            <person name="Gao F."/>
            <person name="Bartlam M."/>
            <person name="Wu J.Y."/>
            <person name="Rao Z."/>
        </authorList>
    </citation>
    <scope>X-RAY CRYSTALLOGRAPHY (1.8 ANGSTROMS) OF 725-776</scope>
    <scope>INTERACTION WITH ROBO1</scope>
</reference>
<feature type="chain" id="PRO_0000056766" description="SLIT-ROBO Rho GTPase-activating protein 1">
    <location>
        <begin position="1"/>
        <end position="1062"/>
    </location>
</feature>
<feature type="domain" description="F-BAR" evidence="6">
    <location>
        <begin position="19"/>
        <end position="314"/>
    </location>
</feature>
<feature type="domain" description="Rho-GAP" evidence="4">
    <location>
        <begin position="481"/>
        <end position="671"/>
    </location>
</feature>
<feature type="domain" description="SH3" evidence="5">
    <location>
        <begin position="720"/>
        <end position="779"/>
    </location>
</feature>
<feature type="region of interest" description="Disordered" evidence="7">
    <location>
        <begin position="785"/>
        <end position="931"/>
    </location>
</feature>
<feature type="region of interest" description="Disordered" evidence="7">
    <location>
        <begin position="974"/>
        <end position="1013"/>
    </location>
</feature>
<feature type="region of interest" description="Disordered" evidence="7">
    <location>
        <begin position="1028"/>
        <end position="1062"/>
    </location>
</feature>
<feature type="coiled-coil region" evidence="3">
    <location>
        <begin position="352"/>
        <end position="382"/>
    </location>
</feature>
<feature type="coiled-coil region" evidence="3">
    <location>
        <begin position="933"/>
        <end position="960"/>
    </location>
</feature>
<feature type="compositionally biased region" description="Polar residues" evidence="7">
    <location>
        <begin position="785"/>
        <end position="799"/>
    </location>
</feature>
<feature type="compositionally biased region" description="Basic and acidic residues" evidence="7">
    <location>
        <begin position="899"/>
        <end position="908"/>
    </location>
</feature>
<feature type="compositionally biased region" description="Polar residues" evidence="7">
    <location>
        <begin position="914"/>
        <end position="923"/>
    </location>
</feature>
<feature type="compositionally biased region" description="Polar residues" evidence="7">
    <location>
        <begin position="974"/>
        <end position="988"/>
    </location>
</feature>
<feature type="compositionally biased region" description="Low complexity" evidence="7">
    <location>
        <begin position="1004"/>
        <end position="1013"/>
    </location>
</feature>
<feature type="compositionally biased region" description="Polar residues" evidence="7">
    <location>
        <begin position="1053"/>
        <end position="1062"/>
    </location>
</feature>
<feature type="site" description="Arginine finger; crucial for GTP hydrolysis by stabilizing the transition state" evidence="4">
    <location>
        <position position="519"/>
    </location>
</feature>
<feature type="modified residue" description="Phosphoserine" evidence="2">
    <location>
        <position position="416"/>
    </location>
</feature>
<feature type="modified residue" description="Phosphoserine" evidence="2">
    <location>
        <position position="812"/>
    </location>
</feature>
<feature type="modified residue" description="Phosphoserine" evidence="2">
    <location>
        <position position="894"/>
    </location>
</feature>
<feature type="modified residue" description="Phosphoserine" evidence="2">
    <location>
        <position position="909"/>
    </location>
</feature>
<feature type="modified residue" description="Phosphoserine" evidence="2">
    <location>
        <position position="976"/>
    </location>
</feature>
<feature type="modified residue" description="Phosphothreonine" evidence="2">
    <location>
        <position position="978"/>
    </location>
</feature>
<feature type="modified residue" description="Phosphoserine" evidence="2">
    <location>
        <position position="1009"/>
    </location>
</feature>
<feature type="sequence conflict" description="In Ref. 2; AAL27030." evidence="9" ref="2">
    <original>F</original>
    <variation>V</variation>
    <location>
        <position position="574"/>
    </location>
</feature>
<feature type="sequence conflict" description="In Ref. 2; AAL27030." evidence="9" ref="2">
    <original>EPIE</original>
    <variation>RGPSR</variation>
    <location>
        <begin position="721"/>
        <end position="724"/>
    </location>
</feature>
<feature type="sequence conflict" description="In Ref. 2; AAL27030." evidence="9" ref="2">
    <original>S</original>
    <variation>G</variation>
    <location>
        <position position="797"/>
    </location>
</feature>
<feature type="strand" evidence="10">
    <location>
        <begin position="725"/>
        <end position="729"/>
    </location>
</feature>
<feature type="strand" evidence="10">
    <location>
        <begin position="746"/>
        <end position="754"/>
    </location>
</feature>
<feature type="strand" evidence="10">
    <location>
        <begin position="757"/>
        <end position="762"/>
    </location>
</feature>
<feature type="strand" evidence="10">
    <location>
        <begin position="765"/>
        <end position="770"/>
    </location>
</feature>
<feature type="helix" evidence="10">
    <location>
        <begin position="771"/>
        <end position="773"/>
    </location>
</feature>
<sequence>MSTPSRFKKDKEIIAEYESQVKEIRAQLVEQQKCLEQQTEMRVQLLQDLQDFFRKKAEIETEYSRNLEKLAERFMAKTRSTKDHQQFKKDQNLLSPVNCWYLLLNQVRRESKDHATLSDIYLNNVIMRFMQISEDSTRMFKKSKEIAFQLHEDLMKVLNELYTVMKTYHMYHSESISAESKLKEAEKQEEKQIGRSGDPVFHIRLEERHQRRSSVKKIEKMKEKRQAKYSENKLKSIKARNEYLLTLEATNASVFKYYIHDLSDLIDCCDLGYHASLNRALRTYLSAEYNLETSRHEGLDIIENAVDNLEPRSDKQRFMEMYPAAFCPPMKFEFQSHMGDEVCQVSAQQPVQAELMLRNQQLQSRLATLKIESEEVKKTTEATLQTIQDMVTIEDYDVSECFQHSRSTESVKSTVSETYLSKPSIAKRRANQQETEQFYFMKLREFLEGSNLITKLQAKHDLLQRTLGEGHRAEYMTTSRGRRNSHARHQDSGQVIPLIVESCIRFINLYGLQHQGIFRVSGSQVEVNDIKNSFERGENPLSDEQSNHDINSVAGVLKLYFRGLENPLFPKERFTDLISCIRIDNLYERALHIRKLLLTLPRSVLIVMRYLFAFLNHLSQYSDENMMDPYNLAICFGPTLMPVPEIQDQVSCQAHVNEIVKTIIIHHETIFPDAKELDGPVYEKCMAGGDYCDSPYSEHGTLEEVDQDAGTEPHTSEDECEPIEAIAKFDYVGRSARELSFKKGASLLLYHRASEDWWEGRHNGIDGLVPHQYIVVQDMDDTFSDTLSQKADSEASSGPVTEDKSSSKDMNSPTDRHSDSYLARQRKRGEPPPPGRRPGRTSDGHCPLHPPHALSNSSIDLGSPNLASHPRGLLQNRGLNNDSPERRRRPGHGSLTNISRHDSLKKIDSPPIRRSTSSGQYTGFNDHKPLDPETIAQDIEETMNTALNELRELERQSTVKHAPDVVLDTLEQVKNSPTPATSTESLSPLHNVALRGSEPQIRRSTSSSSETMSTFKPMVAPRMGVQLKPPALRPKPAVLPKTNPTMGPAAPSQGPTDKSCTM</sequence>
<comment type="function">
    <text evidence="1">GTPase-activating protein for RhoA and Cdc42 small GTPases. Together with CDC42 seems to be involved in the pathway mediating the repulsive signaling of Robo and Slit proteins in neuronal migration. SLIT2, probably through interaction with ROBO1, increases the interaction of SRGAP1 with ROBO1 and inactivates CDC42 (By similarity).</text>
</comment>
<comment type="subunit">
    <text evidence="1 8 9">Homodimer (Probable). Forms a heterooligomer with SRGAP2 and SRGAP3 through its F-BAR domain. Interacts with CDC42 and RHOA. Interacts with FASLG (By similarity). Interacts (via SH3 domain) with ROBO1.</text>
</comment>
<comment type="domain">
    <text evidence="1">The F-BAR domain mediates oligomerization, binds membranes, and constrains plasma membrane protrusions.</text>
</comment>
<comment type="sequence caution" evidence="9">
    <conflict type="erroneous initiation">
        <sequence resource="EMBL-CDS" id="AAL27030"/>
    </conflict>
</comment>
<keyword id="KW-0002">3D-structure</keyword>
<keyword id="KW-0175">Coiled coil</keyword>
<keyword id="KW-0343">GTPase activation</keyword>
<keyword id="KW-0597">Phosphoprotein</keyword>
<keyword id="KW-1185">Reference proteome</keyword>
<keyword id="KW-0728">SH3 domain</keyword>
<evidence type="ECO:0000250" key="1"/>
<evidence type="ECO:0000250" key="2">
    <source>
        <dbReference type="UniProtKB" id="Q7Z6B7"/>
    </source>
</evidence>
<evidence type="ECO:0000255" key="3"/>
<evidence type="ECO:0000255" key="4">
    <source>
        <dbReference type="PROSITE-ProRule" id="PRU00172"/>
    </source>
</evidence>
<evidence type="ECO:0000255" key="5">
    <source>
        <dbReference type="PROSITE-ProRule" id="PRU00192"/>
    </source>
</evidence>
<evidence type="ECO:0000255" key="6">
    <source>
        <dbReference type="PROSITE-ProRule" id="PRU01077"/>
    </source>
</evidence>
<evidence type="ECO:0000256" key="7">
    <source>
        <dbReference type="SAM" id="MobiDB-lite"/>
    </source>
</evidence>
<evidence type="ECO:0000269" key="8">
    <source>
    </source>
</evidence>
<evidence type="ECO:0000305" key="9"/>
<evidence type="ECO:0007829" key="10">
    <source>
        <dbReference type="PDB" id="2GNC"/>
    </source>
</evidence>
<dbReference type="EMBL" id="BC120892">
    <property type="protein sequence ID" value="AAI20893.1"/>
    <property type="molecule type" value="mRNA"/>
</dbReference>
<dbReference type="EMBL" id="BC120893">
    <property type="protein sequence ID" value="AAI20894.1"/>
    <property type="molecule type" value="mRNA"/>
</dbReference>
<dbReference type="EMBL" id="AY057898">
    <property type="protein sequence ID" value="AAL27030.1"/>
    <property type="status" value="ALT_INIT"/>
    <property type="molecule type" value="mRNA"/>
</dbReference>
<dbReference type="CCDS" id="CCDS56751.1"/>
<dbReference type="RefSeq" id="NP_001229340.1">
    <property type="nucleotide sequence ID" value="NM_001242411.1"/>
</dbReference>
<dbReference type="PDB" id="2GNC">
    <property type="method" value="X-ray"/>
    <property type="resolution" value="1.80 A"/>
    <property type="chains" value="A/B=725-776"/>
</dbReference>
<dbReference type="PDBsum" id="2GNC"/>
<dbReference type="SMR" id="Q91Z69"/>
<dbReference type="BioGRID" id="228239">
    <property type="interactions" value="63"/>
</dbReference>
<dbReference type="FunCoup" id="Q91Z69">
    <property type="interactions" value="1323"/>
</dbReference>
<dbReference type="IntAct" id="Q91Z69">
    <property type="interactions" value="1"/>
</dbReference>
<dbReference type="STRING" id="10090.ENSMUSP00000080389"/>
<dbReference type="GlyGen" id="Q91Z69">
    <property type="glycosylation" value="3 sites, 1 N-linked glycan (1 site), 1 O-linked glycan (1 site)"/>
</dbReference>
<dbReference type="iPTMnet" id="Q91Z69"/>
<dbReference type="PhosphoSitePlus" id="Q91Z69"/>
<dbReference type="PaxDb" id="10090-ENSMUSP00000020322"/>
<dbReference type="PeptideAtlas" id="Q91Z69"/>
<dbReference type="ProteomicsDB" id="257400"/>
<dbReference type="Pumba" id="Q91Z69"/>
<dbReference type="Antibodypedia" id="29129">
    <property type="antibodies" value="224 antibodies from 28 providers"/>
</dbReference>
<dbReference type="Ensembl" id="ENSMUST00000020322.12">
    <property type="protein sequence ID" value="ENSMUSP00000020322.6"/>
    <property type="gene ID" value="ENSMUSG00000020121.16"/>
</dbReference>
<dbReference type="GeneID" id="117600"/>
<dbReference type="KEGG" id="mmu:117600"/>
<dbReference type="UCSC" id="uc007hgc.2">
    <property type="organism name" value="mouse"/>
</dbReference>
<dbReference type="AGR" id="MGI:2152936"/>
<dbReference type="CTD" id="57522"/>
<dbReference type="MGI" id="MGI:2152936">
    <property type="gene designation" value="Srgap1"/>
</dbReference>
<dbReference type="VEuPathDB" id="HostDB:ENSMUSG00000020121"/>
<dbReference type="eggNOG" id="KOG3565">
    <property type="taxonomic scope" value="Eukaryota"/>
</dbReference>
<dbReference type="GeneTree" id="ENSGT00950000182824"/>
<dbReference type="InParanoid" id="Q91Z69"/>
<dbReference type="OrthoDB" id="5981864at2759"/>
<dbReference type="TreeFam" id="TF315892"/>
<dbReference type="Reactome" id="R-MMU-8980692">
    <property type="pathway name" value="RHOA GTPase cycle"/>
</dbReference>
<dbReference type="Reactome" id="R-MMU-9013148">
    <property type="pathway name" value="CDC42 GTPase cycle"/>
</dbReference>
<dbReference type="Reactome" id="R-MMU-9013149">
    <property type="pathway name" value="RAC1 GTPase cycle"/>
</dbReference>
<dbReference type="BioGRID-ORCS" id="117600">
    <property type="hits" value="6 hits in 78 CRISPR screens"/>
</dbReference>
<dbReference type="CD-CODE" id="46DAEB10">
    <property type="entry name" value="Synthetic Condensate 000167"/>
</dbReference>
<dbReference type="ChiTaRS" id="Srgap1">
    <property type="organism name" value="mouse"/>
</dbReference>
<dbReference type="EvolutionaryTrace" id="Q91Z69"/>
<dbReference type="PRO" id="PR:Q91Z69"/>
<dbReference type="Proteomes" id="UP000000589">
    <property type="component" value="Chromosome 10"/>
</dbReference>
<dbReference type="RNAct" id="Q91Z69">
    <property type="molecule type" value="protein"/>
</dbReference>
<dbReference type="Bgee" id="ENSMUSG00000020121">
    <property type="expression patterns" value="Expressed in cortical plate and 169 other cell types or tissues"/>
</dbReference>
<dbReference type="ExpressionAtlas" id="Q91Z69">
    <property type="expression patterns" value="baseline and differential"/>
</dbReference>
<dbReference type="GO" id="GO:0005096">
    <property type="term" value="F:GTPase activator activity"/>
    <property type="evidence" value="ECO:0000314"/>
    <property type="project" value="MGI"/>
</dbReference>
<dbReference type="GO" id="GO:0031267">
    <property type="term" value="F:small GTPase binding"/>
    <property type="evidence" value="ECO:0000314"/>
    <property type="project" value="MGI"/>
</dbReference>
<dbReference type="GO" id="GO:0016477">
    <property type="term" value="P:cell migration"/>
    <property type="evidence" value="ECO:0000314"/>
    <property type="project" value="MGI"/>
</dbReference>
<dbReference type="GO" id="GO:0007266">
    <property type="term" value="P:Rho protein signal transduction"/>
    <property type="evidence" value="ECO:0000314"/>
    <property type="project" value="MGI"/>
</dbReference>
<dbReference type="CDD" id="cd07683">
    <property type="entry name" value="F-BAR_srGAP1"/>
    <property type="match status" value="1"/>
</dbReference>
<dbReference type="CDD" id="cd04383">
    <property type="entry name" value="RhoGAP_srGAP"/>
    <property type="match status" value="1"/>
</dbReference>
<dbReference type="CDD" id="cd11955">
    <property type="entry name" value="SH3_srGAP1-3"/>
    <property type="match status" value="1"/>
</dbReference>
<dbReference type="FunFam" id="1.10.555.10:FF:000010">
    <property type="entry name" value="SLIT-ROBO Rho GTPase-activating protein 1 isoform 2"/>
    <property type="match status" value="1"/>
</dbReference>
<dbReference type="FunFam" id="1.20.1270.60:FF:000006">
    <property type="entry name" value="SLIT-ROBO Rho GTPase-activating protein 1 isoform 2"/>
    <property type="match status" value="1"/>
</dbReference>
<dbReference type="FunFam" id="2.30.30.40:FF:000005">
    <property type="entry name" value="SLIT-ROBO Rho GTPase-activating protein 1 isoform 2"/>
    <property type="match status" value="1"/>
</dbReference>
<dbReference type="Gene3D" id="1.20.1270.60">
    <property type="entry name" value="Arfaptin homology (AH) domain/BAR domain"/>
    <property type="match status" value="1"/>
</dbReference>
<dbReference type="Gene3D" id="1.10.555.10">
    <property type="entry name" value="Rho GTPase activation protein"/>
    <property type="match status" value="1"/>
</dbReference>
<dbReference type="Gene3D" id="2.30.30.40">
    <property type="entry name" value="SH3 Domains"/>
    <property type="match status" value="1"/>
</dbReference>
<dbReference type="InterPro" id="IPR027267">
    <property type="entry name" value="AH/BAR_dom_sf"/>
</dbReference>
<dbReference type="InterPro" id="IPR031160">
    <property type="entry name" value="F_BAR"/>
</dbReference>
<dbReference type="InterPro" id="IPR001060">
    <property type="entry name" value="FCH_dom"/>
</dbReference>
<dbReference type="InterPro" id="IPR008936">
    <property type="entry name" value="Rho_GTPase_activation_prot"/>
</dbReference>
<dbReference type="InterPro" id="IPR000198">
    <property type="entry name" value="RhoGAP_dom"/>
</dbReference>
<dbReference type="InterPro" id="IPR036028">
    <property type="entry name" value="SH3-like_dom_sf"/>
</dbReference>
<dbReference type="InterPro" id="IPR001452">
    <property type="entry name" value="SH3_domain"/>
</dbReference>
<dbReference type="InterPro" id="IPR051627">
    <property type="entry name" value="SLIT-ROBO_RhoGAP"/>
</dbReference>
<dbReference type="InterPro" id="IPR035648">
    <property type="entry name" value="srGAP1/2/3_SH3"/>
</dbReference>
<dbReference type="InterPro" id="IPR037451">
    <property type="entry name" value="srGAP1_F-BAR"/>
</dbReference>
<dbReference type="PANTHER" id="PTHR14166">
    <property type="entry name" value="SLIT-ROBO RHO GTPASE ACTIVATING PROTEIN"/>
    <property type="match status" value="1"/>
</dbReference>
<dbReference type="Pfam" id="PF00611">
    <property type="entry name" value="FCH"/>
    <property type="match status" value="1"/>
</dbReference>
<dbReference type="Pfam" id="PF00620">
    <property type="entry name" value="RhoGAP"/>
    <property type="match status" value="1"/>
</dbReference>
<dbReference type="Pfam" id="PF00018">
    <property type="entry name" value="SH3_1"/>
    <property type="match status" value="1"/>
</dbReference>
<dbReference type="SMART" id="SM00055">
    <property type="entry name" value="FCH"/>
    <property type="match status" value="1"/>
</dbReference>
<dbReference type="SMART" id="SM00324">
    <property type="entry name" value="RhoGAP"/>
    <property type="match status" value="1"/>
</dbReference>
<dbReference type="SMART" id="SM00326">
    <property type="entry name" value="SH3"/>
    <property type="match status" value="1"/>
</dbReference>
<dbReference type="SUPFAM" id="SSF103657">
    <property type="entry name" value="BAR/IMD domain-like"/>
    <property type="match status" value="1"/>
</dbReference>
<dbReference type="SUPFAM" id="SSF48350">
    <property type="entry name" value="GTPase activation domain, GAP"/>
    <property type="match status" value="1"/>
</dbReference>
<dbReference type="SUPFAM" id="SSF50044">
    <property type="entry name" value="SH3-domain"/>
    <property type="match status" value="1"/>
</dbReference>
<dbReference type="PROSITE" id="PS51741">
    <property type="entry name" value="F_BAR"/>
    <property type="match status" value="1"/>
</dbReference>
<dbReference type="PROSITE" id="PS50238">
    <property type="entry name" value="RHOGAP"/>
    <property type="match status" value="1"/>
</dbReference>
<dbReference type="PROSITE" id="PS50002">
    <property type="entry name" value="SH3"/>
    <property type="match status" value="1"/>
</dbReference>
<organism>
    <name type="scientific">Mus musculus</name>
    <name type="common">Mouse</name>
    <dbReference type="NCBI Taxonomy" id="10090"/>
    <lineage>
        <taxon>Eukaryota</taxon>
        <taxon>Metazoa</taxon>
        <taxon>Chordata</taxon>
        <taxon>Craniata</taxon>
        <taxon>Vertebrata</taxon>
        <taxon>Euteleostomi</taxon>
        <taxon>Mammalia</taxon>
        <taxon>Eutheria</taxon>
        <taxon>Euarchontoglires</taxon>
        <taxon>Glires</taxon>
        <taxon>Rodentia</taxon>
        <taxon>Myomorpha</taxon>
        <taxon>Muroidea</taxon>
        <taxon>Muridae</taxon>
        <taxon>Murinae</taxon>
        <taxon>Mus</taxon>
        <taxon>Mus</taxon>
    </lineage>
</organism>